<gene>
    <name evidence="1" type="primary">engB</name>
    <name type="ordered locus">RPA0631</name>
</gene>
<keyword id="KW-0131">Cell cycle</keyword>
<keyword id="KW-0132">Cell division</keyword>
<keyword id="KW-0342">GTP-binding</keyword>
<keyword id="KW-0460">Magnesium</keyword>
<keyword id="KW-0479">Metal-binding</keyword>
<keyword id="KW-0547">Nucleotide-binding</keyword>
<keyword id="KW-0717">Septation</keyword>
<proteinExistence type="inferred from homology"/>
<feature type="chain" id="PRO_0000266930" description="Probable GTP-binding protein EngB">
    <location>
        <begin position="1"/>
        <end position="216"/>
    </location>
</feature>
<feature type="domain" description="EngB-type G" evidence="1">
    <location>
        <begin position="37"/>
        <end position="214"/>
    </location>
</feature>
<feature type="binding site" evidence="1">
    <location>
        <begin position="45"/>
        <end position="52"/>
    </location>
    <ligand>
        <name>GTP</name>
        <dbReference type="ChEBI" id="CHEBI:37565"/>
    </ligand>
</feature>
<feature type="binding site" evidence="1">
    <location>
        <position position="52"/>
    </location>
    <ligand>
        <name>Mg(2+)</name>
        <dbReference type="ChEBI" id="CHEBI:18420"/>
    </ligand>
</feature>
<feature type="binding site" evidence="1">
    <location>
        <begin position="72"/>
        <end position="76"/>
    </location>
    <ligand>
        <name>GTP</name>
        <dbReference type="ChEBI" id="CHEBI:37565"/>
    </ligand>
</feature>
<feature type="binding site" evidence="1">
    <location>
        <position position="74"/>
    </location>
    <ligand>
        <name>Mg(2+)</name>
        <dbReference type="ChEBI" id="CHEBI:18420"/>
    </ligand>
</feature>
<feature type="binding site" evidence="1">
    <location>
        <begin position="92"/>
        <end position="95"/>
    </location>
    <ligand>
        <name>GTP</name>
        <dbReference type="ChEBI" id="CHEBI:37565"/>
    </ligand>
</feature>
<feature type="binding site" evidence="1">
    <location>
        <begin position="159"/>
        <end position="162"/>
    </location>
    <ligand>
        <name>GTP</name>
        <dbReference type="ChEBI" id="CHEBI:37565"/>
    </ligand>
</feature>
<feature type="binding site" evidence="1">
    <location>
        <begin position="193"/>
        <end position="195"/>
    </location>
    <ligand>
        <name>GTP</name>
        <dbReference type="ChEBI" id="CHEBI:37565"/>
    </ligand>
</feature>
<dbReference type="EMBL" id="BX572594">
    <property type="protein sequence ID" value="CAE26075.1"/>
    <property type="molecule type" value="Genomic_DNA"/>
</dbReference>
<dbReference type="RefSeq" id="WP_011156199.1">
    <property type="nucleotide sequence ID" value="NZ_CP116810.1"/>
</dbReference>
<dbReference type="SMR" id="Q6NC42"/>
<dbReference type="STRING" id="258594.RPA0631"/>
<dbReference type="GeneID" id="66891652"/>
<dbReference type="eggNOG" id="COG0218">
    <property type="taxonomic scope" value="Bacteria"/>
</dbReference>
<dbReference type="HOGENOM" id="CLU_033732_2_0_5"/>
<dbReference type="PhylomeDB" id="Q6NC42"/>
<dbReference type="GO" id="GO:0005829">
    <property type="term" value="C:cytosol"/>
    <property type="evidence" value="ECO:0007669"/>
    <property type="project" value="TreeGrafter"/>
</dbReference>
<dbReference type="GO" id="GO:0005525">
    <property type="term" value="F:GTP binding"/>
    <property type="evidence" value="ECO:0007669"/>
    <property type="project" value="UniProtKB-UniRule"/>
</dbReference>
<dbReference type="GO" id="GO:0046872">
    <property type="term" value="F:metal ion binding"/>
    <property type="evidence" value="ECO:0007669"/>
    <property type="project" value="UniProtKB-KW"/>
</dbReference>
<dbReference type="GO" id="GO:0000917">
    <property type="term" value="P:division septum assembly"/>
    <property type="evidence" value="ECO:0007669"/>
    <property type="project" value="UniProtKB-KW"/>
</dbReference>
<dbReference type="CDD" id="cd01876">
    <property type="entry name" value="YihA_EngB"/>
    <property type="match status" value="1"/>
</dbReference>
<dbReference type="Gene3D" id="3.40.50.300">
    <property type="entry name" value="P-loop containing nucleotide triphosphate hydrolases"/>
    <property type="match status" value="1"/>
</dbReference>
<dbReference type="HAMAP" id="MF_00321">
    <property type="entry name" value="GTPase_EngB"/>
    <property type="match status" value="1"/>
</dbReference>
<dbReference type="InterPro" id="IPR030393">
    <property type="entry name" value="G_ENGB_dom"/>
</dbReference>
<dbReference type="InterPro" id="IPR006073">
    <property type="entry name" value="GTP-bd"/>
</dbReference>
<dbReference type="InterPro" id="IPR019987">
    <property type="entry name" value="GTP-bd_ribosome_bio_YsxC"/>
</dbReference>
<dbReference type="InterPro" id="IPR027417">
    <property type="entry name" value="P-loop_NTPase"/>
</dbReference>
<dbReference type="NCBIfam" id="TIGR03598">
    <property type="entry name" value="GTPase_YsxC"/>
    <property type="match status" value="1"/>
</dbReference>
<dbReference type="PANTHER" id="PTHR11649:SF13">
    <property type="entry name" value="ENGB-TYPE G DOMAIN-CONTAINING PROTEIN"/>
    <property type="match status" value="1"/>
</dbReference>
<dbReference type="PANTHER" id="PTHR11649">
    <property type="entry name" value="MSS1/TRME-RELATED GTP-BINDING PROTEIN"/>
    <property type="match status" value="1"/>
</dbReference>
<dbReference type="Pfam" id="PF01926">
    <property type="entry name" value="MMR_HSR1"/>
    <property type="match status" value="1"/>
</dbReference>
<dbReference type="SUPFAM" id="SSF52540">
    <property type="entry name" value="P-loop containing nucleoside triphosphate hydrolases"/>
    <property type="match status" value="1"/>
</dbReference>
<dbReference type="PROSITE" id="PS51706">
    <property type="entry name" value="G_ENGB"/>
    <property type="match status" value="1"/>
</dbReference>
<comment type="function">
    <text evidence="1">Necessary for normal cell division and for the maintenance of normal septation.</text>
</comment>
<comment type="cofactor">
    <cofactor evidence="1">
        <name>Mg(2+)</name>
        <dbReference type="ChEBI" id="CHEBI:18420"/>
    </cofactor>
</comment>
<comment type="similarity">
    <text evidence="1">Belongs to the TRAFAC class TrmE-Era-EngA-EngB-Septin-like GTPase superfamily. EngB GTPase family.</text>
</comment>
<protein>
    <recommendedName>
        <fullName evidence="1">Probable GTP-binding protein EngB</fullName>
    </recommendedName>
</protein>
<accession>Q6NC42</accession>
<name>ENGB_RHOPA</name>
<evidence type="ECO:0000255" key="1">
    <source>
        <dbReference type="HAMAP-Rule" id="MF_00321"/>
    </source>
</evidence>
<sequence>MTDAIDPDLIERGRKMFAGDWHFIWASPSIETLPPMGSVEIAFAGRSNVGKSSLINALTGRNALARTSHTPGRTQELIFFEGPPNAGLRLVDMPGYGYAAASKAKVASWTSLIHHFLQGRATLARVYVLIDGRHGLKDVDLDILKTLDKAAVSYQIVLTKADQVKAAELAERVTATVAALAKHPAAFPEVLTTSSRTGAGMPELRAAMIRLLDERR</sequence>
<organism>
    <name type="scientific">Rhodopseudomonas palustris (strain ATCC BAA-98 / CGA009)</name>
    <dbReference type="NCBI Taxonomy" id="258594"/>
    <lineage>
        <taxon>Bacteria</taxon>
        <taxon>Pseudomonadati</taxon>
        <taxon>Pseudomonadota</taxon>
        <taxon>Alphaproteobacteria</taxon>
        <taxon>Hyphomicrobiales</taxon>
        <taxon>Nitrobacteraceae</taxon>
        <taxon>Rhodopseudomonas</taxon>
    </lineage>
</organism>
<reference key="1">
    <citation type="journal article" date="2004" name="Nat. Biotechnol.">
        <title>Complete genome sequence of the metabolically versatile photosynthetic bacterium Rhodopseudomonas palustris.</title>
        <authorList>
            <person name="Larimer F.W."/>
            <person name="Chain P."/>
            <person name="Hauser L."/>
            <person name="Lamerdin J.E."/>
            <person name="Malfatti S."/>
            <person name="Do L."/>
            <person name="Land M.L."/>
            <person name="Pelletier D.A."/>
            <person name="Beatty J.T."/>
            <person name="Lang A.S."/>
            <person name="Tabita F.R."/>
            <person name="Gibson J.L."/>
            <person name="Hanson T.E."/>
            <person name="Bobst C."/>
            <person name="Torres y Torres J.L."/>
            <person name="Peres C."/>
            <person name="Harrison F.H."/>
            <person name="Gibson J."/>
            <person name="Harwood C.S."/>
        </authorList>
    </citation>
    <scope>NUCLEOTIDE SEQUENCE [LARGE SCALE GENOMIC DNA]</scope>
    <source>
        <strain>ATCC BAA-98 / CGA009</strain>
    </source>
</reference>